<reference key="1">
    <citation type="journal article" date="2007" name="PLoS ONE">
        <title>A glimpse of streptococcal toxic shock syndrome from comparative genomics of S. suis 2 Chinese isolates.</title>
        <authorList>
            <person name="Chen C."/>
            <person name="Tang J."/>
            <person name="Dong W."/>
            <person name="Wang C."/>
            <person name="Feng Y."/>
            <person name="Wang J."/>
            <person name="Zheng F."/>
            <person name="Pan X."/>
            <person name="Liu D."/>
            <person name="Li M."/>
            <person name="Song Y."/>
            <person name="Zhu X."/>
            <person name="Sun H."/>
            <person name="Feng T."/>
            <person name="Guo Z."/>
            <person name="Ju A."/>
            <person name="Ge J."/>
            <person name="Dong Y."/>
            <person name="Sun W."/>
            <person name="Jiang Y."/>
            <person name="Wang J."/>
            <person name="Yan J."/>
            <person name="Yang H."/>
            <person name="Wang X."/>
            <person name="Gao G.F."/>
            <person name="Yang R."/>
            <person name="Wang J."/>
            <person name="Yu J."/>
        </authorList>
    </citation>
    <scope>NUCLEOTIDE SEQUENCE [LARGE SCALE GENOMIC DNA]</scope>
    <source>
        <strain>98HAH33</strain>
    </source>
</reference>
<comment type="function">
    <text evidence="1">Binds 23S rRNA and is also seen to make contacts with the A and possibly P site tRNAs.</text>
</comment>
<comment type="subunit">
    <text evidence="1">Part of the 50S ribosomal subunit.</text>
</comment>
<comment type="similarity">
    <text evidence="1">Belongs to the universal ribosomal protein uL16 family.</text>
</comment>
<gene>
    <name evidence="1" type="primary">rplP</name>
    <name type="ordered locus">SSU98_0079</name>
</gene>
<name>RL16_STRS2</name>
<protein>
    <recommendedName>
        <fullName evidence="1">Large ribosomal subunit protein uL16</fullName>
    </recommendedName>
    <alternativeName>
        <fullName evidence="2">50S ribosomal protein L16</fullName>
    </alternativeName>
</protein>
<feature type="chain" id="PRO_1000054716" description="Large ribosomal subunit protein uL16">
    <location>
        <begin position="1"/>
        <end position="137"/>
    </location>
</feature>
<accession>A4VYQ0</accession>
<keyword id="KW-0687">Ribonucleoprotein</keyword>
<keyword id="KW-0689">Ribosomal protein</keyword>
<keyword id="KW-0694">RNA-binding</keyword>
<keyword id="KW-0699">rRNA-binding</keyword>
<keyword id="KW-0820">tRNA-binding</keyword>
<proteinExistence type="inferred from homology"/>
<dbReference type="EMBL" id="CP000408">
    <property type="protein sequence ID" value="ABP91239.1"/>
    <property type="molecule type" value="Genomic_DNA"/>
</dbReference>
<dbReference type="SMR" id="A4VYQ0"/>
<dbReference type="KEGG" id="ssv:SSU98_0079"/>
<dbReference type="HOGENOM" id="CLU_078858_2_1_9"/>
<dbReference type="GO" id="GO:0022625">
    <property type="term" value="C:cytosolic large ribosomal subunit"/>
    <property type="evidence" value="ECO:0007669"/>
    <property type="project" value="TreeGrafter"/>
</dbReference>
<dbReference type="GO" id="GO:0019843">
    <property type="term" value="F:rRNA binding"/>
    <property type="evidence" value="ECO:0007669"/>
    <property type="project" value="UniProtKB-UniRule"/>
</dbReference>
<dbReference type="GO" id="GO:0003735">
    <property type="term" value="F:structural constituent of ribosome"/>
    <property type="evidence" value="ECO:0007669"/>
    <property type="project" value="InterPro"/>
</dbReference>
<dbReference type="GO" id="GO:0000049">
    <property type="term" value="F:tRNA binding"/>
    <property type="evidence" value="ECO:0007669"/>
    <property type="project" value="UniProtKB-KW"/>
</dbReference>
<dbReference type="GO" id="GO:0006412">
    <property type="term" value="P:translation"/>
    <property type="evidence" value="ECO:0007669"/>
    <property type="project" value="UniProtKB-UniRule"/>
</dbReference>
<dbReference type="CDD" id="cd01433">
    <property type="entry name" value="Ribosomal_L16_L10e"/>
    <property type="match status" value="1"/>
</dbReference>
<dbReference type="FunFam" id="3.90.1170.10:FF:000001">
    <property type="entry name" value="50S ribosomal protein L16"/>
    <property type="match status" value="1"/>
</dbReference>
<dbReference type="Gene3D" id="3.90.1170.10">
    <property type="entry name" value="Ribosomal protein L10e/L16"/>
    <property type="match status" value="1"/>
</dbReference>
<dbReference type="HAMAP" id="MF_01342">
    <property type="entry name" value="Ribosomal_uL16"/>
    <property type="match status" value="1"/>
</dbReference>
<dbReference type="InterPro" id="IPR047873">
    <property type="entry name" value="Ribosomal_uL16"/>
</dbReference>
<dbReference type="InterPro" id="IPR000114">
    <property type="entry name" value="Ribosomal_uL16_bact-type"/>
</dbReference>
<dbReference type="InterPro" id="IPR020798">
    <property type="entry name" value="Ribosomal_uL16_CS"/>
</dbReference>
<dbReference type="InterPro" id="IPR016180">
    <property type="entry name" value="Ribosomal_uL16_dom"/>
</dbReference>
<dbReference type="InterPro" id="IPR036920">
    <property type="entry name" value="Ribosomal_uL16_sf"/>
</dbReference>
<dbReference type="NCBIfam" id="TIGR01164">
    <property type="entry name" value="rplP_bact"/>
    <property type="match status" value="1"/>
</dbReference>
<dbReference type="PANTHER" id="PTHR12220">
    <property type="entry name" value="50S/60S RIBOSOMAL PROTEIN L16"/>
    <property type="match status" value="1"/>
</dbReference>
<dbReference type="PANTHER" id="PTHR12220:SF13">
    <property type="entry name" value="LARGE RIBOSOMAL SUBUNIT PROTEIN UL16M"/>
    <property type="match status" value="1"/>
</dbReference>
<dbReference type="Pfam" id="PF00252">
    <property type="entry name" value="Ribosomal_L16"/>
    <property type="match status" value="1"/>
</dbReference>
<dbReference type="PRINTS" id="PR00060">
    <property type="entry name" value="RIBOSOMALL16"/>
</dbReference>
<dbReference type="SUPFAM" id="SSF54686">
    <property type="entry name" value="Ribosomal protein L16p/L10e"/>
    <property type="match status" value="1"/>
</dbReference>
<dbReference type="PROSITE" id="PS00586">
    <property type="entry name" value="RIBOSOMAL_L16_1"/>
    <property type="match status" value="1"/>
</dbReference>
<dbReference type="PROSITE" id="PS00701">
    <property type="entry name" value="RIBOSOMAL_L16_2"/>
    <property type="match status" value="1"/>
</dbReference>
<sequence length="137" mass="15414">MLVPKRVKHRREFRGKMRGEAKGGKQVDFGQYGLQATTSSWITNRQIEAARIAMTRYMKRGGKVWIKIFPHKSYTAKAIGVRMGSGKGAPEGWVAPVKRGKVMFEVAGVSEEIAREAFRLAGHKLPVKVKFVKREAE</sequence>
<evidence type="ECO:0000255" key="1">
    <source>
        <dbReference type="HAMAP-Rule" id="MF_01342"/>
    </source>
</evidence>
<evidence type="ECO:0000305" key="2"/>
<organism>
    <name type="scientific">Streptococcus suis (strain 98HAH33)</name>
    <dbReference type="NCBI Taxonomy" id="391296"/>
    <lineage>
        <taxon>Bacteria</taxon>
        <taxon>Bacillati</taxon>
        <taxon>Bacillota</taxon>
        <taxon>Bacilli</taxon>
        <taxon>Lactobacillales</taxon>
        <taxon>Streptococcaceae</taxon>
        <taxon>Streptococcus</taxon>
    </lineage>
</organism>